<reference key="1">
    <citation type="journal article" date="1995" name="Mol. Cell. Biol.">
        <title>Cloning of cDNAs encoding mammalian double-stranded RNA-specific adenosine deaminase.</title>
        <authorList>
            <person name="O'Connell M.A."/>
            <person name="Krause S."/>
            <person name="Higuchi M."/>
            <person name="Hsuan J.J."/>
            <person name="Totty N.F."/>
            <person name="Jenny A."/>
            <person name="Keller W."/>
        </authorList>
    </citation>
    <scope>NUCLEOTIDE SEQUENCE [MRNA]</scope>
    <scope>TISSUE SPECIFICITY</scope>
    <source>
        <strain>Wistar</strain>
        <tissue>Brain</tissue>
    </source>
</reference>
<reference key="2">
    <citation type="journal article" date="2012" name="Nat. Commun.">
        <title>Quantitative maps of protein phosphorylation sites across 14 different rat organs and tissues.</title>
        <authorList>
            <person name="Lundby A."/>
            <person name="Secher A."/>
            <person name="Lage K."/>
            <person name="Nordsborg N.B."/>
            <person name="Dmytriyev A."/>
            <person name="Lundby C."/>
            <person name="Olsen J.V."/>
        </authorList>
    </citation>
    <scope>PHOSPHORYLATION [LARGE SCALE ANALYSIS] AT SER-228 AND SER-235</scope>
    <scope>IDENTIFICATION BY MASS SPECTROMETRY [LARGE SCALE ANALYSIS]</scope>
</reference>
<proteinExistence type="evidence at protein level"/>
<name>DSRAD_RAT</name>
<organism>
    <name type="scientific">Rattus norvegicus</name>
    <name type="common">Rat</name>
    <dbReference type="NCBI Taxonomy" id="10116"/>
    <lineage>
        <taxon>Eukaryota</taxon>
        <taxon>Metazoa</taxon>
        <taxon>Chordata</taxon>
        <taxon>Craniata</taxon>
        <taxon>Vertebrata</taxon>
        <taxon>Euteleostomi</taxon>
        <taxon>Mammalia</taxon>
        <taxon>Eutheria</taxon>
        <taxon>Euarchontoglires</taxon>
        <taxon>Glires</taxon>
        <taxon>Rodentia</taxon>
        <taxon>Myomorpha</taxon>
        <taxon>Muroidea</taxon>
        <taxon>Muridae</taxon>
        <taxon>Murinae</taxon>
        <taxon>Rattus</taxon>
    </lineage>
</organism>
<dbReference type="EC" id="3.5.4.37"/>
<dbReference type="EMBL" id="U18942">
    <property type="protein sequence ID" value="AAA65039.1"/>
    <property type="molecule type" value="mRNA"/>
</dbReference>
<dbReference type="PIR" id="I57549">
    <property type="entry name" value="I57549"/>
</dbReference>
<dbReference type="RefSeq" id="NP_112268.1">
    <property type="nucleotide sequence ID" value="NM_031006.1"/>
</dbReference>
<dbReference type="SMR" id="P55266"/>
<dbReference type="BioGRID" id="249535">
    <property type="interactions" value="1"/>
</dbReference>
<dbReference type="FunCoup" id="P55266">
    <property type="interactions" value="2742"/>
</dbReference>
<dbReference type="STRING" id="10116.ENSRNOP00000028181"/>
<dbReference type="GlyGen" id="P55266">
    <property type="glycosylation" value="2 sites"/>
</dbReference>
<dbReference type="iPTMnet" id="P55266"/>
<dbReference type="PhosphoSitePlus" id="P55266"/>
<dbReference type="PaxDb" id="10116-ENSRNOP00000028181"/>
<dbReference type="GeneID" id="81635"/>
<dbReference type="KEGG" id="rno:81635"/>
<dbReference type="UCSC" id="RGD:71099">
    <property type="organism name" value="rat"/>
</dbReference>
<dbReference type="AGR" id="RGD:71099"/>
<dbReference type="CTD" id="103"/>
<dbReference type="RGD" id="71099">
    <property type="gene designation" value="Adar"/>
</dbReference>
<dbReference type="eggNOG" id="KOG2777">
    <property type="taxonomic scope" value="Eukaryota"/>
</dbReference>
<dbReference type="InParanoid" id="P55266"/>
<dbReference type="PhylomeDB" id="P55266"/>
<dbReference type="Reactome" id="R-RNO-75102">
    <property type="pathway name" value="C6 deamination of adenosine"/>
</dbReference>
<dbReference type="Reactome" id="R-RNO-77042">
    <property type="pathway name" value="Formation of editosomes by ADAR proteins"/>
</dbReference>
<dbReference type="Reactome" id="R-RNO-9833482">
    <property type="pathway name" value="PKR-mediated signaling"/>
</dbReference>
<dbReference type="PRO" id="PR:P55266"/>
<dbReference type="Proteomes" id="UP000002494">
    <property type="component" value="Unplaced"/>
</dbReference>
<dbReference type="GO" id="GO:0005737">
    <property type="term" value="C:cytoplasm"/>
    <property type="evidence" value="ECO:0000266"/>
    <property type="project" value="RGD"/>
</dbReference>
<dbReference type="GO" id="GO:0016607">
    <property type="term" value="C:nuclear speck"/>
    <property type="evidence" value="ECO:0000314"/>
    <property type="project" value="RGD"/>
</dbReference>
<dbReference type="GO" id="GO:0005730">
    <property type="term" value="C:nucleolus"/>
    <property type="evidence" value="ECO:0000266"/>
    <property type="project" value="RGD"/>
</dbReference>
<dbReference type="GO" id="GO:0005634">
    <property type="term" value="C:nucleus"/>
    <property type="evidence" value="ECO:0000266"/>
    <property type="project" value="RGD"/>
</dbReference>
<dbReference type="GO" id="GO:0044530">
    <property type="term" value="C:supraspliceosomal complex"/>
    <property type="evidence" value="ECO:0000250"/>
    <property type="project" value="UniProtKB"/>
</dbReference>
<dbReference type="GO" id="GO:0003677">
    <property type="term" value="F:DNA binding"/>
    <property type="evidence" value="ECO:0007669"/>
    <property type="project" value="UniProtKB-KW"/>
</dbReference>
<dbReference type="GO" id="GO:0003726">
    <property type="term" value="F:double-stranded RNA adenosine deaminase activity"/>
    <property type="evidence" value="ECO:0000266"/>
    <property type="project" value="RGD"/>
</dbReference>
<dbReference type="GO" id="GO:0003725">
    <property type="term" value="F:double-stranded RNA binding"/>
    <property type="evidence" value="ECO:0000318"/>
    <property type="project" value="GO_Central"/>
</dbReference>
<dbReference type="GO" id="GO:0046872">
    <property type="term" value="F:metal ion binding"/>
    <property type="evidence" value="ECO:0007669"/>
    <property type="project" value="UniProtKB-KW"/>
</dbReference>
<dbReference type="GO" id="GO:0008251">
    <property type="term" value="F:tRNA-specific adenosine deaminase activity"/>
    <property type="evidence" value="ECO:0000318"/>
    <property type="project" value="GO_Central"/>
</dbReference>
<dbReference type="GO" id="GO:0006382">
    <property type="term" value="P:adenosine to inosine editing"/>
    <property type="evidence" value="ECO:0000250"/>
    <property type="project" value="UniProtKB"/>
</dbReference>
<dbReference type="GO" id="GO:0006915">
    <property type="term" value="P:apoptotic process"/>
    <property type="evidence" value="ECO:0000266"/>
    <property type="project" value="RGD"/>
</dbReference>
<dbReference type="GO" id="GO:0016553">
    <property type="term" value="P:base conversion or substitution editing"/>
    <property type="evidence" value="ECO:0000266"/>
    <property type="project" value="RGD"/>
</dbReference>
<dbReference type="GO" id="GO:0098586">
    <property type="term" value="P:cellular response to virus"/>
    <property type="evidence" value="ECO:0000266"/>
    <property type="project" value="RGD"/>
</dbReference>
<dbReference type="GO" id="GO:0051607">
    <property type="term" value="P:defense response to virus"/>
    <property type="evidence" value="ECO:0007669"/>
    <property type="project" value="UniProtKB-KW"/>
</dbReference>
<dbReference type="GO" id="GO:0060216">
    <property type="term" value="P:definitive hemopoiesis"/>
    <property type="evidence" value="ECO:0000266"/>
    <property type="project" value="RGD"/>
</dbReference>
<dbReference type="GO" id="GO:0030218">
    <property type="term" value="P:erythrocyte differentiation"/>
    <property type="evidence" value="ECO:0000266"/>
    <property type="project" value="RGD"/>
</dbReference>
<dbReference type="GO" id="GO:0002244">
    <property type="term" value="P:hematopoietic progenitor cell differentiation"/>
    <property type="evidence" value="ECO:0000266"/>
    <property type="project" value="RGD"/>
</dbReference>
<dbReference type="GO" id="GO:0061484">
    <property type="term" value="P:hematopoietic stem cell homeostasis"/>
    <property type="evidence" value="ECO:0000266"/>
    <property type="project" value="RGD"/>
</dbReference>
<dbReference type="GO" id="GO:0097284">
    <property type="term" value="P:hepatocyte apoptotic process"/>
    <property type="evidence" value="ECO:0000266"/>
    <property type="project" value="RGD"/>
</dbReference>
<dbReference type="GO" id="GO:0045087">
    <property type="term" value="P:innate immune response"/>
    <property type="evidence" value="ECO:0007669"/>
    <property type="project" value="UniProtKB-KW"/>
</dbReference>
<dbReference type="GO" id="GO:0035196">
    <property type="term" value="P:miRNA processing"/>
    <property type="evidence" value="ECO:0000266"/>
    <property type="project" value="RGD"/>
</dbReference>
<dbReference type="GO" id="GO:0006397">
    <property type="term" value="P:mRNA processing"/>
    <property type="evidence" value="ECO:0007669"/>
    <property type="project" value="UniProtKB-KW"/>
</dbReference>
<dbReference type="GO" id="GO:1903944">
    <property type="term" value="P:negative regulation of hepatocyte apoptotic process"/>
    <property type="evidence" value="ECO:0000266"/>
    <property type="project" value="RGD"/>
</dbReference>
<dbReference type="GO" id="GO:1900369">
    <property type="term" value="P:negative regulation of post-transcriptional gene silencing by regulatory ncRNA"/>
    <property type="evidence" value="ECO:0000266"/>
    <property type="project" value="RGD"/>
</dbReference>
<dbReference type="GO" id="GO:0044387">
    <property type="term" value="P:negative regulation of protein kinase activity by regulation of protein phosphorylation"/>
    <property type="evidence" value="ECO:0000250"/>
    <property type="project" value="UniProtKB"/>
</dbReference>
<dbReference type="GO" id="GO:0060339">
    <property type="term" value="P:negative regulation of type I interferon-mediated signaling pathway"/>
    <property type="evidence" value="ECO:0000266"/>
    <property type="project" value="RGD"/>
</dbReference>
<dbReference type="GO" id="GO:0001649">
    <property type="term" value="P:osteoblast differentiation"/>
    <property type="evidence" value="ECO:0000266"/>
    <property type="project" value="RGD"/>
</dbReference>
<dbReference type="GO" id="GO:0045070">
    <property type="term" value="P:positive regulation of viral genome replication"/>
    <property type="evidence" value="ECO:0000250"/>
    <property type="project" value="UniProtKB"/>
</dbReference>
<dbReference type="GO" id="GO:0031054">
    <property type="term" value="P:pre-miRNA processing"/>
    <property type="evidence" value="ECO:0000266"/>
    <property type="project" value="RGD"/>
</dbReference>
<dbReference type="GO" id="GO:0035455">
    <property type="term" value="P:response to interferon-alpha"/>
    <property type="evidence" value="ECO:0000250"/>
    <property type="project" value="UniProtKB"/>
</dbReference>
<dbReference type="GO" id="GO:0009615">
    <property type="term" value="P:response to virus"/>
    <property type="evidence" value="ECO:0000250"/>
    <property type="project" value="UniProtKB"/>
</dbReference>
<dbReference type="GO" id="GO:0070922">
    <property type="term" value="P:RISC complex assembly"/>
    <property type="evidence" value="ECO:0000266"/>
    <property type="project" value="RGD"/>
</dbReference>
<dbReference type="GO" id="GO:0006396">
    <property type="term" value="P:RNA processing"/>
    <property type="evidence" value="ECO:0000318"/>
    <property type="project" value="GO_Central"/>
</dbReference>
<dbReference type="GO" id="GO:0002566">
    <property type="term" value="P:somatic diversification of immune receptors via somatic mutation"/>
    <property type="evidence" value="ECO:0000266"/>
    <property type="project" value="RGD"/>
</dbReference>
<dbReference type="CDD" id="cd19913">
    <property type="entry name" value="DSRM_DRADA_rpt1"/>
    <property type="match status" value="1"/>
</dbReference>
<dbReference type="CDD" id="cd19915">
    <property type="entry name" value="DSRM_DRADA_rpt3"/>
    <property type="match status" value="1"/>
</dbReference>
<dbReference type="FunFam" id="1.10.10.10:FF:000313">
    <property type="entry name" value="double-stranded RNA-specific adenosine deaminase isoform X4"/>
    <property type="match status" value="1"/>
</dbReference>
<dbReference type="FunFam" id="3.30.160.20:FF:000005">
    <property type="entry name" value="Putative double-stranded RNA-specific adenosine deaminase"/>
    <property type="match status" value="3"/>
</dbReference>
<dbReference type="Gene3D" id="3.30.160.20">
    <property type="match status" value="3"/>
</dbReference>
<dbReference type="Gene3D" id="1.10.10.10">
    <property type="entry name" value="Winged helix-like DNA-binding domain superfamily/Winged helix DNA-binding domain"/>
    <property type="match status" value="2"/>
</dbReference>
<dbReference type="InterPro" id="IPR002466">
    <property type="entry name" value="A_deamin"/>
</dbReference>
<dbReference type="InterPro" id="IPR044456">
    <property type="entry name" value="ADAR1_DSRM_1"/>
</dbReference>
<dbReference type="InterPro" id="IPR044457">
    <property type="entry name" value="ADAR1_DSRM_3"/>
</dbReference>
<dbReference type="InterPro" id="IPR014720">
    <property type="entry name" value="dsRBD_dom"/>
</dbReference>
<dbReference type="InterPro" id="IPR036388">
    <property type="entry name" value="WH-like_DNA-bd_sf"/>
</dbReference>
<dbReference type="InterPro" id="IPR036390">
    <property type="entry name" value="WH_DNA-bd_sf"/>
</dbReference>
<dbReference type="InterPro" id="IPR042371">
    <property type="entry name" value="Z_dom"/>
</dbReference>
<dbReference type="PANTHER" id="PTHR10910:SF107">
    <property type="entry name" value="DOUBLE-STRANDED RNA-SPECIFIC ADENOSINE DEAMINASE"/>
    <property type="match status" value="1"/>
</dbReference>
<dbReference type="PANTHER" id="PTHR10910">
    <property type="entry name" value="EUKARYOTE SPECIFIC DSRNA BINDING PROTEIN"/>
    <property type="match status" value="1"/>
</dbReference>
<dbReference type="Pfam" id="PF02137">
    <property type="entry name" value="A_deamin"/>
    <property type="match status" value="1"/>
</dbReference>
<dbReference type="Pfam" id="PF00035">
    <property type="entry name" value="dsrm"/>
    <property type="match status" value="3"/>
</dbReference>
<dbReference type="Pfam" id="PF02295">
    <property type="entry name" value="z-alpha"/>
    <property type="match status" value="2"/>
</dbReference>
<dbReference type="SMART" id="SM00552">
    <property type="entry name" value="ADEAMc"/>
    <property type="match status" value="1"/>
</dbReference>
<dbReference type="SMART" id="SM00358">
    <property type="entry name" value="DSRM"/>
    <property type="match status" value="3"/>
</dbReference>
<dbReference type="SMART" id="SM00550">
    <property type="entry name" value="Zalpha"/>
    <property type="match status" value="2"/>
</dbReference>
<dbReference type="SUPFAM" id="SSF54768">
    <property type="entry name" value="dsRNA-binding domain-like"/>
    <property type="match status" value="3"/>
</dbReference>
<dbReference type="SUPFAM" id="SSF46785">
    <property type="entry name" value="Winged helix' DNA-binding domain"/>
    <property type="match status" value="2"/>
</dbReference>
<dbReference type="PROSITE" id="PS50141">
    <property type="entry name" value="A_DEAMIN_EDITASE"/>
    <property type="match status" value="1"/>
</dbReference>
<dbReference type="PROSITE" id="PS50137">
    <property type="entry name" value="DS_RBD"/>
    <property type="match status" value="3"/>
</dbReference>
<dbReference type="PROSITE" id="PS50139">
    <property type="entry name" value="Z_BINDING"/>
    <property type="match status" value="2"/>
</dbReference>
<accession>P55266</accession>
<comment type="function">
    <text evidence="2 3">Catalyzes the hydrolytic deamination of adenosine to inosine in double-stranded RNA (dsRNA) referred to as A-to-I RNA editing. This may affect gene expression and function in a number of ways that include mRNA translation by changing codons and hence the amino acid sequence of proteins; pre-mRNA splicing by altering splice site recognition sequences; RNA stability by changing sequences involved in nuclease recognition; genetic stability in the case of RNA virus genomes by changing sequences during viral RNA replication; and RNA structure-dependent activities such as microRNA production or targeting or protein-RNA interactions. Can edit both viral and cellular RNAs and can edit RNAs at multiple sites (hyper-editing) or at specific sites (site-specific editing). Its cellular RNA substrates include: bladder cancer-associated protein (BLCAP), neurotransmitter receptors for glutamate (GRIA2) and serotonin (HTR2C) and GABA receptor (GABRA3). Site-specific RNA editing of transcripts encoding these proteins results in amino acid substitutions which consequently alters their functional activities. Exhibits low-level editing at the GRIA2 Q/R site, but edits efficiently at the R/G site and HOTSPOT1. Does not affect polyomavirus replication but provides protection against virus-induced cytopathic effects. Essential for embryonic development and cell survival and plays a critical role in the maintenance of hematopoietic stem cells (By similarity).</text>
</comment>
<comment type="catalytic activity">
    <reaction evidence="2">
        <text>adenosine in double-stranded RNA + H2O + H(+) = inosine in double-stranded RNA + NH4(+)</text>
        <dbReference type="Rhea" id="RHEA:10120"/>
        <dbReference type="Rhea" id="RHEA-COMP:13885"/>
        <dbReference type="Rhea" id="RHEA-COMP:13886"/>
        <dbReference type="ChEBI" id="CHEBI:15377"/>
        <dbReference type="ChEBI" id="CHEBI:15378"/>
        <dbReference type="ChEBI" id="CHEBI:28938"/>
        <dbReference type="ChEBI" id="CHEBI:74411"/>
        <dbReference type="ChEBI" id="CHEBI:82852"/>
        <dbReference type="EC" id="3.5.4.37"/>
    </reaction>
</comment>
<comment type="subunit">
    <text evidence="2">Homodimer. Homodimerization is essential for its catalytic activity. Isoform 5 can form heterodimers with ADARB1/ADAR2. Isoform 1 interacts with ILF2/NF45 and ILF3/NF90. Binding to ILF3/NF90 up-regulates ILF3-mediated gene expression. Isoform 1 and isoform 5 (via DRBM 3 domain) interact with TNPO1. Isoform 5 (via DRBM domains) interacts with XPO5. Isoform 1 and isoform 5 can interact with EIF2AK2/PKR and UPF1.</text>
</comment>
<comment type="subcellular location">
    <subcellularLocation>
        <location evidence="2">Cytoplasm</location>
    </subcellularLocation>
    <subcellularLocation>
        <location evidence="2">Nucleus</location>
    </subcellularLocation>
    <text evidence="2">Shuttles between the cytoplasm and nucleus.</text>
</comment>
<comment type="tissue specificity">
    <text evidence="8">Detected in brain.</text>
</comment>
<comment type="domain">
    <text evidence="2">The first DRADA repeat binds Z-DNA.</text>
</comment>
<comment type="domain">
    <text evidence="2">The third dsRNA-binding domain (DRBM 3) contains an additional N-terminal alpha-helix that is part of a bi-partite nuclear localization signal, together with the sequence immediately C-terminal to DRBM 3. The presence of DRBM 3 is important to bring together the N-terminal and the C-terminal part of the bi-partite nuclear localization signal for import mediated by TNPO1. RNA binding interferes with nuclear import.</text>
</comment>
<comment type="PTM">
    <text evidence="2">Sumoylation reduces RNA-editing activity.</text>
</comment>
<sequence length="1175" mass="129911">MSQGFRGPTGVFPHQTQPCLDPSYEHSKWRYLQPRGSESYLRSFQLQQIEFLKGRLPEAPLIGAQTQSLPPFLPGHWPRFPGPPAQGKQPEIWGFPRSVTLRNQGFHIGPPLPPPHSRGPPWRGAEGLCSHFQELSISQNPEQKVLNRLEELGEGKATTAYALARELRTPKKDINRILYSLERKGKLHRGVGKPPLWSLVPLSQACTQPPRAVNSDKEVPRGEPDLDSEDGDPASDLEGPSELLDMAEIKEKICDYLFNVSKSSALNLAKNIGLAKARDVNAVLIDLERQGDVYREGATPPIWYLTDKKRERLQMKRSTHSGPAATPAAVSEATQSTSFPTCHPPQSGGSSSMATSKRVENGQEPVTKYESRHEARPGPVRLRPHAYHNGPSRAGYVASENGPWATDDIPDNLNSIHTAPGEFRAIMEMPSFYSPTLPRCSPYKKLTECQLKNPVSGLLEYAQFTSQTCDFNLIEQSGPSHEPRFKFQVVINGREFPPAEAGSKKVAKQDAAVKAMAILLREAKAKDSGQPEELSNCPMEEDPEKPAESQPPSSSATSLFSGKSPVTTLLECMHKLGNSCEFRLLSKEGPAHDPKFQYCVAVGAQTFPSVSAPSKKVAKQMAAEEAMKALQEEAANSADDQSGGANTDSLDESVAPNKIRRIGELVRYLNTNPVGGLLEYARSHGFAAEFKLIDQSGPPHEPKFVYQAKVGGRWFPAVCAHSKKQGKQDAADAALRVLIGESEKAEQLGFAEVTPVTGASLRRTMLLLSRSPDAHPKTLPLTGSTFHDQIAMLSHRCFNALTNSFQPSLLGRKILAAIIMKRDPEDMGVVVSLGTGNRCVKGDSLSLKGETVNDCHAEIISRRGFIRFLYSELMKYNHHTAKNSIFELARGGEKLQIKKTVSFHLYISTAPCGDGAHFDKSCSDRAVESTESRHYPVFENPKQGKLRTKVENGEGTIPVESSDIVPTWDGIRLGERLRTMSCSDKILRWNVLGLQGALLTHFLQPVYLKSVTLGYLFSQGHLTRAICCRVTRDGNAFEDGLRYPFIVNHPKVGRVSVYDSKRQSGKTKETSVNWCLADGYDLEILDGTRGTVDGPGKELSRVSKKNIFLQFKKLCSFRARRDLLQLSYGEAKKAARDYDLAKNYFKKSLRDMGYGNWISKPQEEKNFYLCPVPND</sequence>
<feature type="chain" id="PRO_0000171776" description="Double-stranded RNA-specific adenosine deaminase">
    <location>
        <begin position="1"/>
        <end position="1175"/>
    </location>
</feature>
<feature type="domain" description="Z-binding 1" evidence="4">
    <location>
        <begin position="135"/>
        <end position="201"/>
    </location>
</feature>
<feature type="domain" description="Z-binding 2" evidence="4">
    <location>
        <begin position="243"/>
        <end position="307"/>
    </location>
</feature>
<feature type="domain" description="DRBM 1" evidence="6">
    <location>
        <begin position="453"/>
        <end position="521"/>
    </location>
</feature>
<feature type="domain" description="DRBM 2" evidence="6">
    <location>
        <begin position="564"/>
        <end position="632"/>
    </location>
</feature>
<feature type="domain" description="DRBM 3" evidence="6">
    <location>
        <begin position="672"/>
        <end position="740"/>
    </location>
</feature>
<feature type="domain" description="A to I editase" evidence="5">
    <location>
        <begin position="832"/>
        <end position="1167"/>
    </location>
</feature>
<feature type="region of interest" description="Interaction with Z-DNA" evidence="2">
    <location>
        <begin position="135"/>
        <end position="204"/>
    </location>
</feature>
<feature type="region of interest" description="Disordered" evidence="7">
    <location>
        <begin position="207"/>
        <end position="239"/>
    </location>
</feature>
<feature type="region of interest" description="Disordered" evidence="7">
    <location>
        <begin position="315"/>
        <end position="384"/>
    </location>
</feature>
<feature type="region of interest" description="Disordered" evidence="7">
    <location>
        <begin position="524"/>
        <end position="561"/>
    </location>
</feature>
<feature type="region of interest" description="Disordered" evidence="7">
    <location>
        <begin position="632"/>
        <end position="652"/>
    </location>
</feature>
<feature type="region of interest" description="N-terminal extension of DRBM 3 and constituent of a bi-partite nuclear localization signal" evidence="2">
    <location>
        <begin position="662"/>
        <end position="671"/>
    </location>
</feature>
<feature type="region of interest" description="C-terminal extension of DRBM 3 and constituent of a bi-partite nuclear localization signal" evidence="2">
    <location>
        <begin position="741"/>
        <end position="747"/>
    </location>
</feature>
<feature type="compositionally biased region" description="Basic and acidic residues" evidence="7">
    <location>
        <begin position="214"/>
        <end position="224"/>
    </location>
</feature>
<feature type="compositionally biased region" description="Acidic residues" evidence="7">
    <location>
        <begin position="225"/>
        <end position="235"/>
    </location>
</feature>
<feature type="compositionally biased region" description="Basic and acidic residues" evidence="7">
    <location>
        <begin position="357"/>
        <end position="376"/>
    </location>
</feature>
<feature type="compositionally biased region" description="Polar residues" evidence="7">
    <location>
        <begin position="550"/>
        <end position="561"/>
    </location>
</feature>
<feature type="compositionally biased region" description="Polar residues" evidence="7">
    <location>
        <begin position="638"/>
        <end position="648"/>
    </location>
</feature>
<feature type="active site" description="Proton donor" evidence="5">
    <location>
        <position position="858"/>
    </location>
</feature>
<feature type="binding site" evidence="5">
    <location>
        <position position="856"/>
    </location>
    <ligand>
        <name>Zn(2+)</name>
        <dbReference type="ChEBI" id="CHEBI:29105"/>
    </ligand>
</feature>
<feature type="binding site" evidence="5">
    <location>
        <position position="912"/>
    </location>
    <ligand>
        <name>Zn(2+)</name>
        <dbReference type="ChEBI" id="CHEBI:29105"/>
    </ligand>
</feature>
<feature type="binding site" evidence="5">
    <location>
        <position position="982"/>
    </location>
    <ligand>
        <name>Zn(2+)</name>
        <dbReference type="ChEBI" id="CHEBI:29105"/>
    </ligand>
</feature>
<feature type="modified residue" description="Asymmetric dimethylarginine" evidence="2">
    <location>
        <position position="30"/>
    </location>
</feature>
<feature type="modified residue" description="Asymmetric dimethylarginine" evidence="3">
    <location>
        <position position="42"/>
    </location>
</feature>
<feature type="modified residue" description="Phosphoserine" evidence="9">
    <location>
        <position position="228"/>
    </location>
</feature>
<feature type="modified residue" description="Phosphoserine" evidence="9">
    <location>
        <position position="235"/>
    </location>
</feature>
<feature type="modified residue" description="Phosphoserine" evidence="2">
    <location>
        <position position="431"/>
    </location>
</feature>
<feature type="modified residue" description="Phosphoserine" evidence="2">
    <location>
        <position position="564"/>
    </location>
</feature>
<feature type="modified residue" description="Phosphoserine" evidence="2">
    <location>
        <position position="579"/>
    </location>
</feature>
<feature type="modified residue" description="Phosphoserine" evidence="2">
    <location>
        <position position="586"/>
    </location>
</feature>
<feature type="modified residue" description="Phosphothreonine" evidence="2">
    <location>
        <position position="754"/>
    </location>
</feature>
<feature type="modified residue" description="Phosphoserine" evidence="2">
    <location>
        <position position="760"/>
    </location>
</feature>
<feature type="modified residue" description="Phosphoserine" evidence="2">
    <location>
        <position position="769"/>
    </location>
</feature>
<feature type="modified residue" description="Phosphoserine" evidence="2">
    <location>
        <position position="771"/>
    </location>
</feature>
<feature type="cross-link" description="Glycyl lysine isopeptide (Lys-Gly) (interchain with G-Cter in SUMO); alternate" evidence="1">
    <location>
        <position position="368"/>
    </location>
</feature>
<feature type="cross-link" description="Glycyl lysine isopeptide (Lys-Gly) (interchain with G-Cter in SUMO1); alternate" evidence="2">
    <location>
        <position position="368"/>
    </location>
</feature>
<feature type="cross-link" description="Glycyl lysine isopeptide (Lys-Gly) (interchain with G-Cter in SUMO2); alternate" evidence="2">
    <location>
        <position position="368"/>
    </location>
</feature>
<feature type="cross-link" description="Glycyl lysine isopeptide (Lys-Gly) (interchain with G-Cter in SUMO2)" evidence="2">
    <location>
        <position position="821"/>
    </location>
</feature>
<evidence type="ECO:0000250" key="1"/>
<evidence type="ECO:0000250" key="2">
    <source>
        <dbReference type="UniProtKB" id="P55265"/>
    </source>
</evidence>
<evidence type="ECO:0000250" key="3">
    <source>
        <dbReference type="UniProtKB" id="Q99MU3"/>
    </source>
</evidence>
<evidence type="ECO:0000255" key="4">
    <source>
        <dbReference type="PROSITE-ProRule" id="PRU00073"/>
    </source>
</evidence>
<evidence type="ECO:0000255" key="5">
    <source>
        <dbReference type="PROSITE-ProRule" id="PRU00240"/>
    </source>
</evidence>
<evidence type="ECO:0000255" key="6">
    <source>
        <dbReference type="PROSITE-ProRule" id="PRU00266"/>
    </source>
</evidence>
<evidence type="ECO:0000256" key="7">
    <source>
        <dbReference type="SAM" id="MobiDB-lite"/>
    </source>
</evidence>
<evidence type="ECO:0000269" key="8">
    <source>
    </source>
</evidence>
<evidence type="ECO:0007744" key="9">
    <source>
    </source>
</evidence>
<keyword id="KW-0051">Antiviral defense</keyword>
<keyword id="KW-0963">Cytoplasm</keyword>
<keyword id="KW-0238">DNA-binding</keyword>
<keyword id="KW-0378">Hydrolase</keyword>
<keyword id="KW-0391">Immunity</keyword>
<keyword id="KW-0399">Innate immunity</keyword>
<keyword id="KW-1017">Isopeptide bond</keyword>
<keyword id="KW-0479">Metal-binding</keyword>
<keyword id="KW-0488">Methylation</keyword>
<keyword id="KW-0507">mRNA processing</keyword>
<keyword id="KW-0539">Nucleus</keyword>
<keyword id="KW-0597">Phosphoprotein</keyword>
<keyword id="KW-1185">Reference proteome</keyword>
<keyword id="KW-0677">Repeat</keyword>
<keyword id="KW-0694">RNA-binding</keyword>
<keyword id="KW-0943">RNA-mediated gene silencing</keyword>
<keyword id="KW-0804">Transcription</keyword>
<keyword id="KW-0805">Transcription regulation</keyword>
<keyword id="KW-0832">Ubl conjugation</keyword>
<keyword id="KW-0862">Zinc</keyword>
<protein>
    <recommendedName>
        <fullName>Double-stranded RNA-specific adenosine deaminase</fullName>
        <shortName>DRADA</shortName>
        <ecNumber>3.5.4.37</ecNumber>
    </recommendedName>
</protein>
<gene>
    <name type="primary">Adar</name>
    <name type="synonym">Dsrad</name>
</gene>